<reference key="1">
    <citation type="submission" date="2002-07" db="EMBL/GenBank/DDBJ databases">
        <title>Screening and cloning of a new immuno-associated gene regulated by phosphonoformate.</title>
        <authorList>
            <person name="Liu Y."/>
            <person name="Cheng J."/>
            <person name="Lu Y."/>
        </authorList>
    </citation>
    <scope>NUCLEOTIDE SEQUENCE [MRNA]</scope>
</reference>
<reference key="2">
    <citation type="journal article" date="2004" name="Nat. Genet.">
        <title>Complete sequencing and characterization of 21,243 full-length human cDNAs.</title>
        <authorList>
            <person name="Ota T."/>
            <person name="Suzuki Y."/>
            <person name="Nishikawa T."/>
            <person name="Otsuki T."/>
            <person name="Sugiyama T."/>
            <person name="Irie R."/>
            <person name="Wakamatsu A."/>
            <person name="Hayashi K."/>
            <person name="Sato H."/>
            <person name="Nagai K."/>
            <person name="Kimura K."/>
            <person name="Makita H."/>
            <person name="Sekine M."/>
            <person name="Obayashi M."/>
            <person name="Nishi T."/>
            <person name="Shibahara T."/>
            <person name="Tanaka T."/>
            <person name="Ishii S."/>
            <person name="Yamamoto J."/>
            <person name="Saito K."/>
            <person name="Kawai Y."/>
            <person name="Isono Y."/>
            <person name="Nakamura Y."/>
            <person name="Nagahari K."/>
            <person name="Murakami K."/>
            <person name="Yasuda T."/>
            <person name="Iwayanagi T."/>
            <person name="Wagatsuma M."/>
            <person name="Shiratori A."/>
            <person name="Sudo H."/>
            <person name="Hosoiri T."/>
            <person name="Kaku Y."/>
            <person name="Kodaira H."/>
            <person name="Kondo H."/>
            <person name="Sugawara M."/>
            <person name="Takahashi M."/>
            <person name="Kanda K."/>
            <person name="Yokoi T."/>
            <person name="Furuya T."/>
            <person name="Kikkawa E."/>
            <person name="Omura Y."/>
            <person name="Abe K."/>
            <person name="Kamihara K."/>
            <person name="Katsuta N."/>
            <person name="Sato K."/>
            <person name="Tanikawa M."/>
            <person name="Yamazaki M."/>
            <person name="Ninomiya K."/>
            <person name="Ishibashi T."/>
            <person name="Yamashita H."/>
            <person name="Murakawa K."/>
            <person name="Fujimori K."/>
            <person name="Tanai H."/>
            <person name="Kimata M."/>
            <person name="Watanabe M."/>
            <person name="Hiraoka S."/>
            <person name="Chiba Y."/>
            <person name="Ishida S."/>
            <person name="Ono Y."/>
            <person name="Takiguchi S."/>
            <person name="Watanabe S."/>
            <person name="Yosida M."/>
            <person name="Hotuta T."/>
            <person name="Kusano J."/>
            <person name="Kanehori K."/>
            <person name="Takahashi-Fujii A."/>
            <person name="Hara H."/>
            <person name="Tanase T.-O."/>
            <person name="Nomura Y."/>
            <person name="Togiya S."/>
            <person name="Komai F."/>
            <person name="Hara R."/>
            <person name="Takeuchi K."/>
            <person name="Arita M."/>
            <person name="Imose N."/>
            <person name="Musashino K."/>
            <person name="Yuuki H."/>
            <person name="Oshima A."/>
            <person name="Sasaki N."/>
            <person name="Aotsuka S."/>
            <person name="Yoshikawa Y."/>
            <person name="Matsunawa H."/>
            <person name="Ichihara T."/>
            <person name="Shiohata N."/>
            <person name="Sano S."/>
            <person name="Moriya S."/>
            <person name="Momiyama H."/>
            <person name="Satoh N."/>
            <person name="Takami S."/>
            <person name="Terashima Y."/>
            <person name="Suzuki O."/>
            <person name="Nakagawa S."/>
            <person name="Senoh A."/>
            <person name="Mizoguchi H."/>
            <person name="Goto Y."/>
            <person name="Shimizu F."/>
            <person name="Wakebe H."/>
            <person name="Hishigaki H."/>
            <person name="Watanabe T."/>
            <person name="Sugiyama A."/>
            <person name="Takemoto M."/>
            <person name="Kawakami B."/>
            <person name="Yamazaki M."/>
            <person name="Watanabe K."/>
            <person name="Kumagai A."/>
            <person name="Itakura S."/>
            <person name="Fukuzumi Y."/>
            <person name="Fujimori Y."/>
            <person name="Komiyama M."/>
            <person name="Tashiro H."/>
            <person name="Tanigami A."/>
            <person name="Fujiwara T."/>
            <person name="Ono T."/>
            <person name="Yamada K."/>
            <person name="Fujii Y."/>
            <person name="Ozaki K."/>
            <person name="Hirao M."/>
            <person name="Ohmori Y."/>
            <person name="Kawabata A."/>
            <person name="Hikiji T."/>
            <person name="Kobatake N."/>
            <person name="Inagaki H."/>
            <person name="Ikema Y."/>
            <person name="Okamoto S."/>
            <person name="Okitani R."/>
            <person name="Kawakami T."/>
            <person name="Noguchi S."/>
            <person name="Itoh T."/>
            <person name="Shigeta K."/>
            <person name="Senba T."/>
            <person name="Matsumura K."/>
            <person name="Nakajima Y."/>
            <person name="Mizuno T."/>
            <person name="Morinaga M."/>
            <person name="Sasaki M."/>
            <person name="Togashi T."/>
            <person name="Oyama M."/>
            <person name="Hata H."/>
            <person name="Watanabe M."/>
            <person name="Komatsu T."/>
            <person name="Mizushima-Sugano J."/>
            <person name="Satoh T."/>
            <person name="Shirai Y."/>
            <person name="Takahashi Y."/>
            <person name="Nakagawa K."/>
            <person name="Okumura K."/>
            <person name="Nagase T."/>
            <person name="Nomura N."/>
            <person name="Kikuchi H."/>
            <person name="Masuho Y."/>
            <person name="Yamashita R."/>
            <person name="Nakai K."/>
            <person name="Yada T."/>
            <person name="Nakamura Y."/>
            <person name="Ohara O."/>
            <person name="Isogai T."/>
            <person name="Sugano S."/>
        </authorList>
    </citation>
    <scope>NUCLEOTIDE SEQUENCE [LARGE SCALE MRNA]</scope>
    <source>
        <tissue>Esophagus</tissue>
    </source>
</reference>
<reference key="3">
    <citation type="journal article" date="2005" name="Nature">
        <title>Generation and annotation of the DNA sequences of human chromosomes 2 and 4.</title>
        <authorList>
            <person name="Hillier L.W."/>
            <person name="Graves T.A."/>
            <person name="Fulton R.S."/>
            <person name="Fulton L.A."/>
            <person name="Pepin K.H."/>
            <person name="Minx P."/>
            <person name="Wagner-McPherson C."/>
            <person name="Layman D."/>
            <person name="Wylie K."/>
            <person name="Sekhon M."/>
            <person name="Becker M.C."/>
            <person name="Fewell G.A."/>
            <person name="Delehaunty K.D."/>
            <person name="Miner T.L."/>
            <person name="Nash W.E."/>
            <person name="Kremitzki C."/>
            <person name="Oddy L."/>
            <person name="Du H."/>
            <person name="Sun H."/>
            <person name="Bradshaw-Cordum H."/>
            <person name="Ali J."/>
            <person name="Carter J."/>
            <person name="Cordes M."/>
            <person name="Harris A."/>
            <person name="Isak A."/>
            <person name="van Brunt A."/>
            <person name="Nguyen C."/>
            <person name="Du F."/>
            <person name="Courtney L."/>
            <person name="Kalicki J."/>
            <person name="Ozersky P."/>
            <person name="Abbott S."/>
            <person name="Armstrong J."/>
            <person name="Belter E.A."/>
            <person name="Caruso L."/>
            <person name="Cedroni M."/>
            <person name="Cotton M."/>
            <person name="Davidson T."/>
            <person name="Desai A."/>
            <person name="Elliott G."/>
            <person name="Erb T."/>
            <person name="Fronick C."/>
            <person name="Gaige T."/>
            <person name="Haakenson W."/>
            <person name="Haglund K."/>
            <person name="Holmes A."/>
            <person name="Harkins R."/>
            <person name="Kim K."/>
            <person name="Kruchowski S.S."/>
            <person name="Strong C.M."/>
            <person name="Grewal N."/>
            <person name="Goyea E."/>
            <person name="Hou S."/>
            <person name="Levy A."/>
            <person name="Martinka S."/>
            <person name="Mead K."/>
            <person name="McLellan M.D."/>
            <person name="Meyer R."/>
            <person name="Randall-Maher J."/>
            <person name="Tomlinson C."/>
            <person name="Dauphin-Kohlberg S."/>
            <person name="Kozlowicz-Reilly A."/>
            <person name="Shah N."/>
            <person name="Swearengen-Shahid S."/>
            <person name="Snider J."/>
            <person name="Strong J.T."/>
            <person name="Thompson J."/>
            <person name="Yoakum M."/>
            <person name="Leonard S."/>
            <person name="Pearman C."/>
            <person name="Trani L."/>
            <person name="Radionenko M."/>
            <person name="Waligorski J.E."/>
            <person name="Wang C."/>
            <person name="Rock S.M."/>
            <person name="Tin-Wollam A.-M."/>
            <person name="Maupin R."/>
            <person name="Latreille P."/>
            <person name="Wendl M.C."/>
            <person name="Yang S.-P."/>
            <person name="Pohl C."/>
            <person name="Wallis J.W."/>
            <person name="Spieth J."/>
            <person name="Bieri T.A."/>
            <person name="Berkowicz N."/>
            <person name="Nelson J.O."/>
            <person name="Osborne J."/>
            <person name="Ding L."/>
            <person name="Meyer R."/>
            <person name="Sabo A."/>
            <person name="Shotland Y."/>
            <person name="Sinha P."/>
            <person name="Wohldmann P.E."/>
            <person name="Cook L.L."/>
            <person name="Hickenbotham M.T."/>
            <person name="Eldred J."/>
            <person name="Williams D."/>
            <person name="Jones T.A."/>
            <person name="She X."/>
            <person name="Ciccarelli F.D."/>
            <person name="Izaurralde E."/>
            <person name="Taylor J."/>
            <person name="Schmutz J."/>
            <person name="Myers R.M."/>
            <person name="Cox D.R."/>
            <person name="Huang X."/>
            <person name="McPherson J.D."/>
            <person name="Mardis E.R."/>
            <person name="Clifton S.W."/>
            <person name="Warren W.C."/>
            <person name="Chinwalla A.T."/>
            <person name="Eddy S.R."/>
            <person name="Marra M.A."/>
            <person name="Ovcharenko I."/>
            <person name="Furey T.S."/>
            <person name="Miller W."/>
            <person name="Eichler E.E."/>
            <person name="Bork P."/>
            <person name="Suyama M."/>
            <person name="Torrents D."/>
            <person name="Waterston R.H."/>
            <person name="Wilson R.K."/>
        </authorList>
    </citation>
    <scope>NUCLEOTIDE SEQUENCE [LARGE SCALE GENOMIC DNA]</scope>
</reference>
<reference key="4">
    <citation type="submission" date="2005-09" db="EMBL/GenBank/DDBJ databases">
        <authorList>
            <person name="Mural R.J."/>
            <person name="Istrail S."/>
            <person name="Sutton G.G."/>
            <person name="Florea L."/>
            <person name="Halpern A.L."/>
            <person name="Mobarry C.M."/>
            <person name="Lippert R."/>
            <person name="Walenz B."/>
            <person name="Shatkay H."/>
            <person name="Dew I."/>
            <person name="Miller J.R."/>
            <person name="Flanigan M.J."/>
            <person name="Edwards N.J."/>
            <person name="Bolanos R."/>
            <person name="Fasulo D."/>
            <person name="Halldorsson B.V."/>
            <person name="Hannenhalli S."/>
            <person name="Turner R."/>
            <person name="Yooseph S."/>
            <person name="Lu F."/>
            <person name="Nusskern D.R."/>
            <person name="Shue B.C."/>
            <person name="Zheng X.H."/>
            <person name="Zhong F."/>
            <person name="Delcher A.L."/>
            <person name="Huson D.H."/>
            <person name="Kravitz S.A."/>
            <person name="Mouchard L."/>
            <person name="Reinert K."/>
            <person name="Remington K.A."/>
            <person name="Clark A.G."/>
            <person name="Waterman M.S."/>
            <person name="Eichler E.E."/>
            <person name="Adams M.D."/>
            <person name="Hunkapiller M.W."/>
            <person name="Myers E.W."/>
            <person name="Venter J.C."/>
        </authorList>
    </citation>
    <scope>NUCLEOTIDE SEQUENCE [LARGE SCALE GENOMIC DNA]</scope>
</reference>
<reference key="5">
    <citation type="journal article" date="2004" name="Genome Res.">
        <title>The status, quality, and expansion of the NIH full-length cDNA project: the Mammalian Gene Collection (MGC).</title>
        <authorList>
            <consortium name="The MGC Project Team"/>
        </authorList>
    </citation>
    <scope>NUCLEOTIDE SEQUENCE [LARGE SCALE MRNA]</scope>
    <source>
        <tissue>Brain</tissue>
        <tissue>Lung</tissue>
    </source>
</reference>
<reference key="6">
    <citation type="journal article" date="2008" name="Mol. Cell">
        <title>Kinase-selective enrichment enables quantitative phosphoproteomics of the kinome across the cell cycle.</title>
        <authorList>
            <person name="Daub H."/>
            <person name="Olsen J.V."/>
            <person name="Bairlein M."/>
            <person name="Gnad F."/>
            <person name="Oppermann F.S."/>
            <person name="Korner R."/>
            <person name="Greff Z."/>
            <person name="Keri G."/>
            <person name="Stemmann O."/>
            <person name="Mann M."/>
        </authorList>
    </citation>
    <scope>PHOSPHORYLATION [LARGE SCALE ANALYSIS] AT SER-2; SER-36 AND SER-65</scope>
    <scope>IDENTIFICATION BY MASS SPECTROMETRY [LARGE SCALE ANALYSIS]</scope>
    <source>
        <tissue>Cervix carcinoma</tissue>
    </source>
</reference>
<reference key="7">
    <citation type="journal article" date="2008" name="Proc. Natl. Acad. Sci. U.S.A.">
        <title>A quantitative atlas of mitotic phosphorylation.</title>
        <authorList>
            <person name="Dephoure N."/>
            <person name="Zhou C."/>
            <person name="Villen J."/>
            <person name="Beausoleil S.A."/>
            <person name="Bakalarski C.E."/>
            <person name="Elledge S.J."/>
            <person name="Gygi S.P."/>
        </authorList>
    </citation>
    <scope>IDENTIFICATION BY MASS SPECTROMETRY [LARGE SCALE ANALYSIS]</scope>
    <source>
        <tissue>Cervix carcinoma</tissue>
    </source>
</reference>
<reference key="8">
    <citation type="journal article" date="2010" name="Sci. Signal.">
        <title>Quantitative phosphoproteomics reveals widespread full phosphorylation site occupancy during mitosis.</title>
        <authorList>
            <person name="Olsen J.V."/>
            <person name="Vermeulen M."/>
            <person name="Santamaria A."/>
            <person name="Kumar C."/>
            <person name="Miller M.L."/>
            <person name="Jensen L.J."/>
            <person name="Gnad F."/>
            <person name="Cox J."/>
            <person name="Jensen T.S."/>
            <person name="Nigg E.A."/>
            <person name="Brunak S."/>
            <person name="Mann M."/>
        </authorList>
    </citation>
    <scope>PHOSPHORYLATION [LARGE SCALE ANALYSIS] AT SER-60 AND SER-65</scope>
    <scope>IDENTIFICATION BY MASS SPECTROMETRY [LARGE SCALE ANALYSIS]</scope>
    <source>
        <tissue>Cervix carcinoma</tissue>
    </source>
</reference>
<reference key="9">
    <citation type="journal article" date="2013" name="J. Proteome Res.">
        <title>Toward a comprehensive characterization of a human cancer cell phosphoproteome.</title>
        <authorList>
            <person name="Zhou H."/>
            <person name="Di Palma S."/>
            <person name="Preisinger C."/>
            <person name="Peng M."/>
            <person name="Polat A.N."/>
            <person name="Heck A.J."/>
            <person name="Mohammed S."/>
        </authorList>
    </citation>
    <scope>PHOSPHORYLATION [LARGE SCALE ANALYSIS] AT SER-65 AND SER-80</scope>
    <scope>IDENTIFICATION BY MASS SPECTROMETRY [LARGE SCALE ANALYSIS]</scope>
    <source>
        <tissue>Cervix carcinoma</tissue>
        <tissue>Erythroleukemia</tissue>
    </source>
</reference>
<keyword id="KW-0472">Membrane</keyword>
<keyword id="KW-0539">Nucleus</keyword>
<keyword id="KW-0597">Phosphoprotein</keyword>
<keyword id="KW-1267">Proteomics identification</keyword>
<keyword id="KW-1185">Reference proteome</keyword>
<keyword id="KW-0812">Transmembrane</keyword>
<keyword id="KW-1133">Transmembrane helix</keyword>
<comment type="interaction">
    <interactant intactId="EBI-2808844">
        <id>Q8N6S5</id>
    </interactant>
    <interactant intactId="EBI-13059134">
        <id>Q13520</id>
        <label>AQP6</label>
    </interactant>
    <organismsDiffer>false</organismsDiffer>
    <experiments>3</experiments>
</comment>
<comment type="interaction">
    <interactant intactId="EBI-2808844">
        <id>Q8N6S5</id>
    </interactant>
    <interactant intactId="EBI-12813623">
        <id>A0PK11</id>
        <label>CLRN2</label>
    </interactant>
    <organismsDiffer>false</organismsDiffer>
    <experiments>3</experiments>
</comment>
<comment type="interaction">
    <interactant intactId="EBI-2808844">
        <id>Q8N6S5</id>
    </interactant>
    <interactant intactId="EBI-2339374">
        <id>Q8TAZ6</id>
        <label>CMTM2</label>
    </interactant>
    <organismsDiffer>false</organismsDiffer>
    <experiments>3</experiments>
</comment>
<comment type="interaction">
    <interactant intactId="EBI-2808844">
        <id>Q8N6S5</id>
    </interactant>
    <interactant intactId="EBI-3915253">
        <id>Q15125</id>
        <label>EBP</label>
    </interactant>
    <organismsDiffer>false</organismsDiffer>
    <experiments>3</experiments>
</comment>
<comment type="interaction">
    <interactant intactId="EBI-2808844">
        <id>Q8N6S5</id>
    </interactant>
    <interactant intactId="EBI-17458373">
        <id>P48165</id>
        <label>GJA8</label>
    </interactant>
    <organismsDiffer>false</organismsDiffer>
    <experiments>3</experiments>
</comment>
<comment type="interaction">
    <interactant intactId="EBI-2808844">
        <id>Q8N6S5</id>
    </interactant>
    <interactant intactId="EBI-12808020">
        <id>Q9BZJ8</id>
        <label>GPR61</label>
    </interactant>
    <organismsDiffer>false</organismsDiffer>
    <experiments>3</experiments>
</comment>
<comment type="interaction">
    <interactant intactId="EBI-2808844">
        <id>Q8N6S5</id>
    </interactant>
    <interactant intactId="EBI-724754">
        <id>O14880</id>
        <label>MGST3</label>
    </interactant>
    <organismsDiffer>false</organismsDiffer>
    <experiments>3</experiments>
</comment>
<comment type="interaction">
    <interactant intactId="EBI-2808844">
        <id>Q8N6S5</id>
    </interactant>
    <interactant intactId="EBI-8636004">
        <id>Q96GQ5</id>
        <label>RUSF1</label>
    </interactant>
    <organismsDiffer>false</organismsDiffer>
    <experiments>3</experiments>
</comment>
<comment type="interaction">
    <interactant intactId="EBI-2808844">
        <id>Q8N6S5</id>
    </interactant>
    <interactant intactId="EBI-3923031">
        <id>Q14973</id>
        <label>SLC10A1</label>
    </interactant>
    <organismsDiffer>false</organismsDiffer>
    <experiments>3</experiments>
</comment>
<comment type="interaction">
    <interactant intactId="EBI-2808844">
        <id>Q8N6S5</id>
    </interactant>
    <interactant intactId="EBI-18271435">
        <id>Q0VAB0</id>
        <label>TBXA2R</label>
    </interactant>
    <organismsDiffer>false</organismsDiffer>
    <experiments>3</experiments>
</comment>
<comment type="interaction">
    <interactant intactId="EBI-2808844">
        <id>Q8N6S5</id>
    </interactant>
    <interactant intactId="EBI-6268651">
        <id>Q9NPL8</id>
        <label>TIMMDC1</label>
    </interactant>
    <organismsDiffer>false</organismsDiffer>
    <experiments>3</experiments>
</comment>
<comment type="interaction">
    <interactant intactId="EBI-2808844">
        <id>Q8N6S5</id>
    </interactant>
    <interactant intactId="EBI-6269551">
        <id>Q6UW68</id>
        <label>TMEM205</label>
    </interactant>
    <organismsDiffer>false</organismsDiffer>
    <experiments>3</experiments>
</comment>
<comment type="interaction">
    <interactant intactId="EBI-2808844">
        <id>Q8N6S5</id>
    </interactant>
    <interactant intactId="EBI-11742770">
        <id>Q96HE8</id>
        <label>TMEM80</label>
    </interactant>
    <organismsDiffer>false</organismsDiffer>
    <experiments>3</experiments>
</comment>
<comment type="interaction">
    <interactant intactId="EBI-2808844">
        <id>Q8N6S5</id>
    </interactant>
    <interactant intactId="EBI-2548832">
        <id>Q8N661</id>
        <label>TMEM86B</label>
    </interactant>
    <organismsDiffer>false</organismsDiffer>
    <experiments>3</experiments>
</comment>
<comment type="subcellular location">
    <subcellularLocation>
        <location evidence="1">Nucleus inner membrane</location>
        <topology evidence="2">Multi-pass membrane protein</topology>
    </subcellularLocation>
</comment>
<comment type="similarity">
    <text evidence="4">Belongs to the ARL6IP6 family.</text>
</comment>
<gene>
    <name type="primary">ARL6IP6</name>
    <name type="synonym">PFAAP1</name>
</gene>
<sequence>MSFAESGWRSALRRRGPGTPGPVARPSYSSFTQGDSWGEGEVDEEEGCDQVARDLRAEFSAGAWSEPRKRSVLPPDGNGSPVLPDKRNGIFPAAAGSRAQPRRWPVQVLSILCSLLFAILLAFLLAIAYLIVKELHAENLKNEDDVDTGLLGFWTLLIISLTAGFSCCSFSWTVTYFDSFEPGMFPPTPLSPARFKKLTGHSFHMGYSMAILNGIVAALTVAWCLM</sequence>
<name>AR6P6_HUMAN</name>
<accession>Q8N6S5</accession>
<accession>B2RDS6</accession>
<accession>Q7Z4G7</accession>
<proteinExistence type="evidence at protein level"/>
<feature type="chain" id="PRO_0000307324" description="ADP-ribosylation factor-like protein 6-interacting protein 6">
    <location>
        <begin position="1"/>
        <end position="226"/>
    </location>
</feature>
<feature type="transmembrane region" description="Helical" evidence="2">
    <location>
        <begin position="111"/>
        <end position="131"/>
    </location>
</feature>
<feature type="transmembrane region" description="Helical" evidence="2">
    <location>
        <begin position="150"/>
        <end position="170"/>
    </location>
</feature>
<feature type="transmembrane region" description="Helical" evidence="2">
    <location>
        <begin position="205"/>
        <end position="225"/>
    </location>
</feature>
<feature type="region of interest" description="Disordered" evidence="3">
    <location>
        <begin position="1"/>
        <end position="48"/>
    </location>
</feature>
<feature type="region of interest" description="Disordered" evidence="3">
    <location>
        <begin position="66"/>
        <end position="85"/>
    </location>
</feature>
<feature type="compositionally biased region" description="Acidic residues" evidence="3">
    <location>
        <begin position="38"/>
        <end position="48"/>
    </location>
</feature>
<feature type="modified residue" description="Phosphoserine" evidence="5">
    <location>
        <position position="2"/>
    </location>
</feature>
<feature type="modified residue" description="Phosphoserine" evidence="5">
    <location>
        <position position="36"/>
    </location>
</feature>
<feature type="modified residue" description="Phosphoserine" evidence="6">
    <location>
        <position position="60"/>
    </location>
</feature>
<feature type="modified residue" description="Phosphoserine" evidence="5 6 7">
    <location>
        <position position="65"/>
    </location>
</feature>
<feature type="modified residue" description="Phosphoserine" evidence="7">
    <location>
        <position position="80"/>
    </location>
</feature>
<feature type="sequence conflict" description="In Ref. 1; AAQ09943." evidence="4" ref="1">
    <original>G</original>
    <variation>A</variation>
    <location>
        <position position="21"/>
    </location>
</feature>
<dbReference type="EMBL" id="AF530059">
    <property type="protein sequence ID" value="AAQ09943.1"/>
    <property type="molecule type" value="mRNA"/>
</dbReference>
<dbReference type="EMBL" id="AK315657">
    <property type="protein sequence ID" value="BAG38023.1"/>
    <property type="molecule type" value="mRNA"/>
</dbReference>
<dbReference type="EMBL" id="AC079344">
    <property type="protein sequence ID" value="AAX93217.1"/>
    <property type="molecule type" value="Genomic_DNA"/>
</dbReference>
<dbReference type="EMBL" id="CH471058">
    <property type="protein sequence ID" value="EAX11477.1"/>
    <property type="molecule type" value="Genomic_DNA"/>
</dbReference>
<dbReference type="EMBL" id="BC028741">
    <property type="protein sequence ID" value="AAH28741.1"/>
    <property type="molecule type" value="mRNA"/>
</dbReference>
<dbReference type="EMBL" id="BC070140">
    <property type="protein sequence ID" value="AAH70140.1"/>
    <property type="molecule type" value="mRNA"/>
</dbReference>
<dbReference type="CCDS" id="CCDS2197.1"/>
<dbReference type="RefSeq" id="NP_689735.1">
    <property type="nucleotide sequence ID" value="NM_152522.7"/>
</dbReference>
<dbReference type="BioGRID" id="127351">
    <property type="interactions" value="90"/>
</dbReference>
<dbReference type="FunCoup" id="Q8N6S5">
    <property type="interactions" value="1034"/>
</dbReference>
<dbReference type="IntAct" id="Q8N6S5">
    <property type="interactions" value="68"/>
</dbReference>
<dbReference type="MINT" id="Q8N6S5"/>
<dbReference type="STRING" id="9606.ENSP00000315357"/>
<dbReference type="iPTMnet" id="Q8N6S5"/>
<dbReference type="PhosphoSitePlus" id="Q8N6S5"/>
<dbReference type="SwissPalm" id="Q8N6S5"/>
<dbReference type="BioMuta" id="ARL6IP6"/>
<dbReference type="DMDM" id="74729171"/>
<dbReference type="jPOST" id="Q8N6S5"/>
<dbReference type="MassIVE" id="Q8N6S5"/>
<dbReference type="PaxDb" id="9606-ENSP00000315357"/>
<dbReference type="PeptideAtlas" id="Q8N6S5"/>
<dbReference type="ProteomicsDB" id="72225"/>
<dbReference type="Pumba" id="Q8N6S5"/>
<dbReference type="Antibodypedia" id="3110">
    <property type="antibodies" value="101 antibodies from 21 providers"/>
</dbReference>
<dbReference type="DNASU" id="151188"/>
<dbReference type="Ensembl" id="ENST00000326446.10">
    <property type="protein sequence ID" value="ENSP00000315357.5"/>
    <property type="gene ID" value="ENSG00000177917.12"/>
</dbReference>
<dbReference type="GeneID" id="151188"/>
<dbReference type="KEGG" id="hsa:151188"/>
<dbReference type="MANE-Select" id="ENST00000326446.10">
    <property type="protein sequence ID" value="ENSP00000315357.5"/>
    <property type="RefSeq nucleotide sequence ID" value="NM_152522.7"/>
    <property type="RefSeq protein sequence ID" value="NP_689735.1"/>
</dbReference>
<dbReference type="UCSC" id="uc002tyn.4">
    <property type="organism name" value="human"/>
</dbReference>
<dbReference type="AGR" id="HGNC:24048"/>
<dbReference type="CTD" id="151188"/>
<dbReference type="DisGeNET" id="151188"/>
<dbReference type="GeneCards" id="ARL6IP6"/>
<dbReference type="HGNC" id="HGNC:24048">
    <property type="gene designation" value="ARL6IP6"/>
</dbReference>
<dbReference type="HPA" id="ENSG00000177917">
    <property type="expression patterns" value="Tissue enhanced (skeletal)"/>
</dbReference>
<dbReference type="MalaCards" id="ARL6IP6"/>
<dbReference type="MIM" id="616495">
    <property type="type" value="gene"/>
</dbReference>
<dbReference type="neXtProt" id="NX_Q8N6S5"/>
<dbReference type="OpenTargets" id="ENSG00000177917"/>
<dbReference type="Orphanet" id="1556">
    <property type="disease" value="Cutis marmorata telangiectatica congenita"/>
</dbReference>
<dbReference type="PharmGKB" id="PA134866669"/>
<dbReference type="VEuPathDB" id="HostDB:ENSG00000177917"/>
<dbReference type="eggNOG" id="ENOG502S1PC">
    <property type="taxonomic scope" value="Eukaryota"/>
</dbReference>
<dbReference type="GeneTree" id="ENSGT00390000009987"/>
<dbReference type="HOGENOM" id="CLU_1229535_0_0_1"/>
<dbReference type="InParanoid" id="Q8N6S5"/>
<dbReference type="OMA" id="TVAWCLL"/>
<dbReference type="OrthoDB" id="10070125at2759"/>
<dbReference type="PAN-GO" id="Q8N6S5">
    <property type="GO annotations" value="0 GO annotations based on evolutionary models"/>
</dbReference>
<dbReference type="PhylomeDB" id="Q8N6S5"/>
<dbReference type="TreeFam" id="TF324669"/>
<dbReference type="PathwayCommons" id="Q8N6S5"/>
<dbReference type="SignaLink" id="Q8N6S5"/>
<dbReference type="BioGRID-ORCS" id="151188">
    <property type="hits" value="17 hits in 1154 CRISPR screens"/>
</dbReference>
<dbReference type="ChiTaRS" id="ARL6IP6">
    <property type="organism name" value="human"/>
</dbReference>
<dbReference type="GenomeRNAi" id="151188"/>
<dbReference type="Pharos" id="Q8N6S5">
    <property type="development level" value="Tdark"/>
</dbReference>
<dbReference type="PRO" id="PR:Q8N6S5"/>
<dbReference type="Proteomes" id="UP000005640">
    <property type="component" value="Chromosome 2"/>
</dbReference>
<dbReference type="RNAct" id="Q8N6S5">
    <property type="molecule type" value="protein"/>
</dbReference>
<dbReference type="Bgee" id="ENSG00000177917">
    <property type="expression patterns" value="Expressed in ventricular zone and 186 other cell types or tissues"/>
</dbReference>
<dbReference type="ExpressionAtlas" id="Q8N6S5">
    <property type="expression patterns" value="baseline and differential"/>
</dbReference>
<dbReference type="GO" id="GO:0005637">
    <property type="term" value="C:nuclear inner membrane"/>
    <property type="evidence" value="ECO:0000250"/>
    <property type="project" value="UniProtKB"/>
</dbReference>
<dbReference type="InterPro" id="IPR029383">
    <property type="entry name" value="ARL6IP6"/>
</dbReference>
<dbReference type="PANTHER" id="PTHR28640">
    <property type="entry name" value="ADP-RIBOSYLATION FACTOR-LIKE PROTEIN 6-INTERACTING PROTEIN 6"/>
    <property type="match status" value="1"/>
</dbReference>
<dbReference type="PANTHER" id="PTHR28640:SF1">
    <property type="entry name" value="ADP-RIBOSYLATION FACTOR-LIKE PROTEIN 6-INTERACTING PROTEIN 6"/>
    <property type="match status" value="1"/>
</dbReference>
<dbReference type="Pfam" id="PF15062">
    <property type="entry name" value="ARL6IP6"/>
    <property type="match status" value="1"/>
</dbReference>
<protein>
    <recommendedName>
        <fullName>ADP-ribosylation factor-like protein 6-interacting protein 6</fullName>
        <shortName>ARL-6-interacting protein 6</shortName>
        <shortName>Aip-6</shortName>
    </recommendedName>
    <alternativeName>
        <fullName>Phosphonoformate immuno-associated protein 1</fullName>
    </alternativeName>
</protein>
<evidence type="ECO:0000250" key="1">
    <source>
        <dbReference type="UniProtKB" id="Q8BH07"/>
    </source>
</evidence>
<evidence type="ECO:0000255" key="2"/>
<evidence type="ECO:0000256" key="3">
    <source>
        <dbReference type="SAM" id="MobiDB-lite"/>
    </source>
</evidence>
<evidence type="ECO:0000305" key="4"/>
<evidence type="ECO:0007744" key="5">
    <source>
    </source>
</evidence>
<evidence type="ECO:0007744" key="6">
    <source>
    </source>
</evidence>
<evidence type="ECO:0007744" key="7">
    <source>
    </source>
</evidence>
<organism>
    <name type="scientific">Homo sapiens</name>
    <name type="common">Human</name>
    <dbReference type="NCBI Taxonomy" id="9606"/>
    <lineage>
        <taxon>Eukaryota</taxon>
        <taxon>Metazoa</taxon>
        <taxon>Chordata</taxon>
        <taxon>Craniata</taxon>
        <taxon>Vertebrata</taxon>
        <taxon>Euteleostomi</taxon>
        <taxon>Mammalia</taxon>
        <taxon>Eutheria</taxon>
        <taxon>Euarchontoglires</taxon>
        <taxon>Primates</taxon>
        <taxon>Haplorrhini</taxon>
        <taxon>Catarrhini</taxon>
        <taxon>Hominidae</taxon>
        <taxon>Homo</taxon>
    </lineage>
</organism>